<comment type="function">
    <text evidence="1">Key enzyme in the regulation of glycerol uptake and metabolism. Catalyzes the phosphorylation of glycerol to yield sn-glycerol 3-phosphate.</text>
</comment>
<comment type="catalytic activity">
    <reaction evidence="1">
        <text>glycerol + ATP = sn-glycerol 3-phosphate + ADP + H(+)</text>
        <dbReference type="Rhea" id="RHEA:21644"/>
        <dbReference type="ChEBI" id="CHEBI:15378"/>
        <dbReference type="ChEBI" id="CHEBI:17754"/>
        <dbReference type="ChEBI" id="CHEBI:30616"/>
        <dbReference type="ChEBI" id="CHEBI:57597"/>
        <dbReference type="ChEBI" id="CHEBI:456216"/>
        <dbReference type="EC" id="2.7.1.30"/>
    </reaction>
</comment>
<comment type="activity regulation">
    <text evidence="1">Inhibited by fructose 1,6-bisphosphate (FBP).</text>
</comment>
<comment type="pathway">
    <text evidence="1">Polyol metabolism; glycerol degradation via glycerol kinase pathway; sn-glycerol 3-phosphate from glycerol: step 1/1.</text>
</comment>
<comment type="similarity">
    <text evidence="1">Belongs to the FGGY kinase family.</text>
</comment>
<protein>
    <recommendedName>
        <fullName evidence="1">Glycerol kinase</fullName>
        <ecNumber evidence="1">2.7.1.30</ecNumber>
    </recommendedName>
    <alternativeName>
        <fullName evidence="1">ATP:glycerol 3-phosphotransferase</fullName>
    </alternativeName>
    <alternativeName>
        <fullName evidence="1">Glycerokinase</fullName>
        <shortName evidence="1">GK</shortName>
    </alternativeName>
</protein>
<sequence length="494" mass="54042">MQKKYVVALDQGTTSSRAIVFDHDANIVSVSQREFTQLYPNPGWVEHDPMEIWASQSSVLVEALARAGIHSDEVAAIGITNQRETTVIWEKATGKPIYNAIVWQCRRSAEICEQLKAQGLEEYVRENTGLLLDPYFSGTKIKWILDNVPNAREQADRGELLFGTIDTWLVWKLTEGKVHVTDPTNAARTLLFNIHSLTWDNKLLEALDIPLSMLPDVKPSCSVYGTTRIAGEGSEIQVAGMAGDQQAALFGQLCVEPGMAKNTYGTGCFLLMNTGTKAVRSNHGLLTTVAVGPKGEVNYALEGSVFMGGATIQWLRDELGLIRDASDTEYFASKVADTNGVYLVPAFVGLGAPYWDPNARGALFGLTRGANRNHIIRAALESIAYQSKDLLDAMIKDSGVSLKRLKVDGGAVANDFLMQFQADITDVEVLRPSVCETTALGAAFLAGLAVGFWESVIELEHKACIDKHFIPNIDAQTRVQLYAGWQDAVARTRT</sequence>
<proteinExistence type="inferred from homology"/>
<organism>
    <name type="scientific">Shewanella putrefaciens (strain CN-32 / ATCC BAA-453)</name>
    <dbReference type="NCBI Taxonomy" id="319224"/>
    <lineage>
        <taxon>Bacteria</taxon>
        <taxon>Pseudomonadati</taxon>
        <taxon>Pseudomonadota</taxon>
        <taxon>Gammaproteobacteria</taxon>
        <taxon>Alteromonadales</taxon>
        <taxon>Shewanellaceae</taxon>
        <taxon>Shewanella</taxon>
    </lineage>
</organism>
<name>GLPK_SHEPC</name>
<dbReference type="EC" id="2.7.1.30" evidence="1"/>
<dbReference type="EMBL" id="CP000681">
    <property type="protein sequence ID" value="ABP74208.1"/>
    <property type="molecule type" value="Genomic_DNA"/>
</dbReference>
<dbReference type="SMR" id="A4Y2M5"/>
<dbReference type="STRING" id="319224.Sputcn32_0476"/>
<dbReference type="KEGG" id="spc:Sputcn32_0476"/>
<dbReference type="eggNOG" id="COG0554">
    <property type="taxonomic scope" value="Bacteria"/>
</dbReference>
<dbReference type="HOGENOM" id="CLU_009281_2_3_6"/>
<dbReference type="UniPathway" id="UPA00618">
    <property type="reaction ID" value="UER00672"/>
</dbReference>
<dbReference type="GO" id="GO:0005829">
    <property type="term" value="C:cytosol"/>
    <property type="evidence" value="ECO:0007669"/>
    <property type="project" value="TreeGrafter"/>
</dbReference>
<dbReference type="GO" id="GO:0005524">
    <property type="term" value="F:ATP binding"/>
    <property type="evidence" value="ECO:0007669"/>
    <property type="project" value="UniProtKB-UniRule"/>
</dbReference>
<dbReference type="GO" id="GO:0004370">
    <property type="term" value="F:glycerol kinase activity"/>
    <property type="evidence" value="ECO:0000250"/>
    <property type="project" value="UniProtKB"/>
</dbReference>
<dbReference type="GO" id="GO:0019563">
    <property type="term" value="P:glycerol catabolic process"/>
    <property type="evidence" value="ECO:0007669"/>
    <property type="project" value="UniProtKB-UniRule"/>
</dbReference>
<dbReference type="GO" id="GO:0006071">
    <property type="term" value="P:glycerol metabolic process"/>
    <property type="evidence" value="ECO:0000250"/>
    <property type="project" value="UniProtKB"/>
</dbReference>
<dbReference type="GO" id="GO:0006072">
    <property type="term" value="P:glycerol-3-phosphate metabolic process"/>
    <property type="evidence" value="ECO:0007669"/>
    <property type="project" value="InterPro"/>
</dbReference>
<dbReference type="CDD" id="cd07786">
    <property type="entry name" value="FGGY_EcGK_like"/>
    <property type="match status" value="1"/>
</dbReference>
<dbReference type="FunFam" id="3.30.420.40:FF:000007">
    <property type="entry name" value="Glycerol kinase"/>
    <property type="match status" value="1"/>
</dbReference>
<dbReference type="FunFam" id="3.30.420.40:FF:000008">
    <property type="entry name" value="Glycerol kinase"/>
    <property type="match status" value="1"/>
</dbReference>
<dbReference type="Gene3D" id="3.30.420.40">
    <property type="match status" value="2"/>
</dbReference>
<dbReference type="HAMAP" id="MF_00186">
    <property type="entry name" value="Glycerol_kin"/>
    <property type="match status" value="1"/>
</dbReference>
<dbReference type="InterPro" id="IPR043129">
    <property type="entry name" value="ATPase_NBD"/>
</dbReference>
<dbReference type="InterPro" id="IPR000577">
    <property type="entry name" value="Carb_kinase_FGGY"/>
</dbReference>
<dbReference type="InterPro" id="IPR018483">
    <property type="entry name" value="Carb_kinase_FGGY_CS"/>
</dbReference>
<dbReference type="InterPro" id="IPR018485">
    <property type="entry name" value="FGGY_C"/>
</dbReference>
<dbReference type="InterPro" id="IPR018484">
    <property type="entry name" value="FGGY_N"/>
</dbReference>
<dbReference type="InterPro" id="IPR005999">
    <property type="entry name" value="Glycerol_kin"/>
</dbReference>
<dbReference type="NCBIfam" id="TIGR01311">
    <property type="entry name" value="glycerol_kin"/>
    <property type="match status" value="1"/>
</dbReference>
<dbReference type="NCBIfam" id="NF000756">
    <property type="entry name" value="PRK00047.1"/>
    <property type="match status" value="1"/>
</dbReference>
<dbReference type="PANTHER" id="PTHR10196:SF69">
    <property type="entry name" value="GLYCEROL KINASE"/>
    <property type="match status" value="1"/>
</dbReference>
<dbReference type="PANTHER" id="PTHR10196">
    <property type="entry name" value="SUGAR KINASE"/>
    <property type="match status" value="1"/>
</dbReference>
<dbReference type="Pfam" id="PF02782">
    <property type="entry name" value="FGGY_C"/>
    <property type="match status" value="1"/>
</dbReference>
<dbReference type="Pfam" id="PF00370">
    <property type="entry name" value="FGGY_N"/>
    <property type="match status" value="1"/>
</dbReference>
<dbReference type="PIRSF" id="PIRSF000538">
    <property type="entry name" value="GlpK"/>
    <property type="match status" value="1"/>
</dbReference>
<dbReference type="SUPFAM" id="SSF53067">
    <property type="entry name" value="Actin-like ATPase domain"/>
    <property type="match status" value="2"/>
</dbReference>
<dbReference type="PROSITE" id="PS00933">
    <property type="entry name" value="FGGY_KINASES_1"/>
    <property type="match status" value="1"/>
</dbReference>
<dbReference type="PROSITE" id="PS00445">
    <property type="entry name" value="FGGY_KINASES_2"/>
    <property type="match status" value="1"/>
</dbReference>
<evidence type="ECO:0000255" key="1">
    <source>
        <dbReference type="HAMAP-Rule" id="MF_00186"/>
    </source>
</evidence>
<accession>A4Y2M5</accession>
<keyword id="KW-0067">ATP-binding</keyword>
<keyword id="KW-0319">Glycerol metabolism</keyword>
<keyword id="KW-0418">Kinase</keyword>
<keyword id="KW-0547">Nucleotide-binding</keyword>
<keyword id="KW-0808">Transferase</keyword>
<gene>
    <name evidence="1" type="primary">glpK</name>
    <name type="ordered locus">Sputcn32_0476</name>
</gene>
<feature type="chain" id="PRO_1000020781" description="Glycerol kinase">
    <location>
        <begin position="1"/>
        <end position="494"/>
    </location>
</feature>
<feature type="binding site" evidence="1">
    <location>
        <position position="13"/>
    </location>
    <ligand>
        <name>ADP</name>
        <dbReference type="ChEBI" id="CHEBI:456216"/>
    </ligand>
</feature>
<feature type="binding site" evidence="1">
    <location>
        <position position="13"/>
    </location>
    <ligand>
        <name>ATP</name>
        <dbReference type="ChEBI" id="CHEBI:30616"/>
    </ligand>
</feature>
<feature type="binding site" evidence="1">
    <location>
        <position position="13"/>
    </location>
    <ligand>
        <name>sn-glycerol 3-phosphate</name>
        <dbReference type="ChEBI" id="CHEBI:57597"/>
    </ligand>
</feature>
<feature type="binding site" evidence="1">
    <location>
        <position position="14"/>
    </location>
    <ligand>
        <name>ATP</name>
        <dbReference type="ChEBI" id="CHEBI:30616"/>
    </ligand>
</feature>
<feature type="binding site" evidence="1">
    <location>
        <position position="15"/>
    </location>
    <ligand>
        <name>ATP</name>
        <dbReference type="ChEBI" id="CHEBI:30616"/>
    </ligand>
</feature>
<feature type="binding site" evidence="1">
    <location>
        <position position="17"/>
    </location>
    <ligand>
        <name>ADP</name>
        <dbReference type="ChEBI" id="CHEBI:456216"/>
    </ligand>
</feature>
<feature type="binding site" evidence="1">
    <location>
        <position position="83"/>
    </location>
    <ligand>
        <name>glycerol</name>
        <dbReference type="ChEBI" id="CHEBI:17754"/>
    </ligand>
</feature>
<feature type="binding site" evidence="1">
    <location>
        <position position="83"/>
    </location>
    <ligand>
        <name>sn-glycerol 3-phosphate</name>
        <dbReference type="ChEBI" id="CHEBI:57597"/>
    </ligand>
</feature>
<feature type="binding site" evidence="1">
    <location>
        <position position="84"/>
    </location>
    <ligand>
        <name>glycerol</name>
        <dbReference type="ChEBI" id="CHEBI:17754"/>
    </ligand>
</feature>
<feature type="binding site" evidence="1">
    <location>
        <position position="84"/>
    </location>
    <ligand>
        <name>sn-glycerol 3-phosphate</name>
        <dbReference type="ChEBI" id="CHEBI:57597"/>
    </ligand>
</feature>
<feature type="binding site" evidence="1">
    <location>
        <position position="135"/>
    </location>
    <ligand>
        <name>glycerol</name>
        <dbReference type="ChEBI" id="CHEBI:17754"/>
    </ligand>
</feature>
<feature type="binding site" evidence="1">
    <location>
        <position position="135"/>
    </location>
    <ligand>
        <name>sn-glycerol 3-phosphate</name>
        <dbReference type="ChEBI" id="CHEBI:57597"/>
    </ligand>
</feature>
<feature type="binding site" evidence="1">
    <location>
        <position position="244"/>
    </location>
    <ligand>
        <name>glycerol</name>
        <dbReference type="ChEBI" id="CHEBI:17754"/>
    </ligand>
</feature>
<feature type="binding site" evidence="1">
    <location>
        <position position="244"/>
    </location>
    <ligand>
        <name>sn-glycerol 3-phosphate</name>
        <dbReference type="ChEBI" id="CHEBI:57597"/>
    </ligand>
</feature>
<feature type="binding site" evidence="1">
    <location>
        <position position="245"/>
    </location>
    <ligand>
        <name>glycerol</name>
        <dbReference type="ChEBI" id="CHEBI:17754"/>
    </ligand>
</feature>
<feature type="binding site" evidence="1">
    <location>
        <position position="266"/>
    </location>
    <ligand>
        <name>ADP</name>
        <dbReference type="ChEBI" id="CHEBI:456216"/>
    </ligand>
</feature>
<feature type="binding site" evidence="1">
    <location>
        <position position="266"/>
    </location>
    <ligand>
        <name>ATP</name>
        <dbReference type="ChEBI" id="CHEBI:30616"/>
    </ligand>
</feature>
<feature type="binding site" evidence="1">
    <location>
        <position position="309"/>
    </location>
    <ligand>
        <name>ADP</name>
        <dbReference type="ChEBI" id="CHEBI:456216"/>
    </ligand>
</feature>
<feature type="binding site" evidence="1">
    <location>
        <position position="309"/>
    </location>
    <ligand>
        <name>ATP</name>
        <dbReference type="ChEBI" id="CHEBI:30616"/>
    </ligand>
</feature>
<feature type="binding site" evidence="1">
    <location>
        <position position="313"/>
    </location>
    <ligand>
        <name>ATP</name>
        <dbReference type="ChEBI" id="CHEBI:30616"/>
    </ligand>
</feature>
<feature type="binding site" evidence="1">
    <location>
        <position position="410"/>
    </location>
    <ligand>
        <name>ADP</name>
        <dbReference type="ChEBI" id="CHEBI:456216"/>
    </ligand>
</feature>
<feature type="binding site" evidence="1">
    <location>
        <position position="410"/>
    </location>
    <ligand>
        <name>ATP</name>
        <dbReference type="ChEBI" id="CHEBI:30616"/>
    </ligand>
</feature>
<feature type="binding site" evidence="1">
    <location>
        <position position="414"/>
    </location>
    <ligand>
        <name>ADP</name>
        <dbReference type="ChEBI" id="CHEBI:456216"/>
    </ligand>
</feature>
<reference key="1">
    <citation type="submission" date="2007-04" db="EMBL/GenBank/DDBJ databases">
        <title>Complete sequence of Shewanella putrefaciens CN-32.</title>
        <authorList>
            <consortium name="US DOE Joint Genome Institute"/>
            <person name="Copeland A."/>
            <person name="Lucas S."/>
            <person name="Lapidus A."/>
            <person name="Barry K."/>
            <person name="Detter J.C."/>
            <person name="Glavina del Rio T."/>
            <person name="Hammon N."/>
            <person name="Israni S."/>
            <person name="Dalin E."/>
            <person name="Tice H."/>
            <person name="Pitluck S."/>
            <person name="Chain P."/>
            <person name="Malfatti S."/>
            <person name="Shin M."/>
            <person name="Vergez L."/>
            <person name="Schmutz J."/>
            <person name="Larimer F."/>
            <person name="Land M."/>
            <person name="Hauser L."/>
            <person name="Kyrpides N."/>
            <person name="Mikhailova N."/>
            <person name="Romine M.F."/>
            <person name="Fredrickson J."/>
            <person name="Tiedje J."/>
            <person name="Richardson P."/>
        </authorList>
    </citation>
    <scope>NUCLEOTIDE SEQUENCE [LARGE SCALE GENOMIC DNA]</scope>
    <source>
        <strain>CN-32 / ATCC BAA-453</strain>
    </source>
</reference>